<evidence type="ECO:0000250" key="1">
    <source>
        <dbReference type="UniProtKB" id="Q5VW36"/>
    </source>
</evidence>
<evidence type="ECO:0000269" key="2">
    <source>
    </source>
</evidence>
<evidence type="ECO:0000303" key="3">
    <source>
    </source>
</evidence>
<evidence type="ECO:0000303" key="4">
    <source>
    </source>
</evidence>
<evidence type="ECO:0000305" key="5"/>
<sequence length="1798" mass="198950">MSDDIKKRFDFPNSLIQSQAVGHLIAAVLKEHGVSEKIHQSTNQTAALNLLWEKCCSDHVVVRTACSEGLVALVAQGHAEFSYVLNGILNLTPSARNMSGLIKALMKLLQMQALREGQSGEKDIQDIYSIRNPPQPLITVLEHRPDCWPLLLQQLTAFFQQCPERSEASCVQIMAPFLWYLYCEPSQLEEYAKLRLSLLKVLLQPRGVCEEAQLSVREQSTLQLCCSMLPCLQMKDLMQTTEMMLFVEEVYLSLLRHPGFWKSQLTQLTLQLLCICEVSLKITGECSSLIHLLERSVELLGEDFPVELVIIGIALLLLQMPASQQKPLLNLALKLLSLTEGQKIPKASLLLLVPLLQILSSTALEDCLAMGEEGPSRQQLALSLVEVLQKERHGDDSHTISCRLAFPVSSMYGSIFTAWRILDVIGEESATSDWLATVESLLSATTVIPPHVFLLLAYLLVEDVGQNLQQILRVTTQLAQADSSQVPNLIPVLMFKLGRPLDPVSYNHILYTLPTLGVHKVCVGQILRVIQLLGTTPRLRAVTLRLLTSLWEKQDRVYPELQRFMAVSDAPSLSVGKELQWEKLIAKAASIRDICKQRPYQHGADMLAAISQVLNECTKPDQATPAALVLQGLHALCQAEVVCIRSTWNALSPKLSCDMRPLILKTLSELFSLVPSLTVNTVEYENFKVQVLSFLWTHTQNKNPTVASAAYKSLSHFSAGEHTILHLPEKIRPEMPVPGELDEEESVDLSIPGACFLRLLTITAPSVLPALEEFFTSLVRQEMVNMPRGIYHSALKGGVRSDQGKTVAGIPNFILKTYETNKQPGLKPGLAGGMLFCYDLAMYQSKDGKPLNRLMASRGRSFKQTTLALIHEVHVQLSEWHRAIFLPQAWLAYMTRAYHAILQGRIAELELQLQHGKEGPEEVQYKRSTAWLWVRDMLTDEITKTAAKESPVVKANALLALSSLAVVVSKHEASLCSDSDGVLEIQPNFLPVKEWVSMVLNTLLVIVDSHYHPSGQLFTCFYHKSYSGENTASAIARSAAATALSLLVPVFIISCKEKVEEILNMLTARLPGKPSADESQAVQIHMGLALGMFLSRLCEEKLSDMSGQQMNLLLMKSLDALESCCFDPSLEYNTGCILGVGLALSLMSHSSHTESRVHVAASLRKLSTYLDESGSQSRTFQEVLVYTLSCVCTSAFSAGIIEAAEAEDIMSKLQLLVENNQQTSGFALALGNLVYGLSVCGHGKAEDLGNRLRPSWIKVVLTEGAPTMLCLAALHGLVALVGSDVDVMQLKSEAIQNTHFQARLNEVIRTLTEVISVSGVIGLQSNAIWLLGHLHLSTLSSNQSRTSVPTDYSYLPEGSFIRAAIGFFITGGKKGPEAVPPSLLKVVMKPIATVGESYQYPPANLAALLSPLMRLNFGEEIQQLCLEIAVTQAPSSQSAASLLGLWVMPPLIHGLSLNIKKYLLVSMPLWAKHVSDEQIQGFVENLMVEVFKTASQPCHPEMCLSALQGLSQAMKLPSPSHHLWSLLCDATGRIFDLLPNRIRRNDLELYISIAKCLSEMTDEGVNQVSQITKDNIEKAAFVKLYLVSQGRLPLMSLTDLLTAAMQHPEKETLAWMILHSLYQARIVNHANTGVLKRLEWLLELMGYVRNIAYQSAPIQNVAPEEALDFLMLIFAAAVVAWADHEAPLLLGLSASWLPWHQQNGPGGPAAALLGRSPMHRVTVQEVLTQLPRSMLLLLQKEPWKEQTQKFIDWLLSIMEIPNKAFAAKSKDLLKATLLSLRVLPEFKKKAVWTRAYGW</sequence>
<proteinExistence type="evidence at protein level"/>
<gene>
    <name type="primary">Focad</name>
    <name type="synonym">Kiaa1797</name>
</gene>
<keyword id="KW-0007">Acetylation</keyword>
<keyword id="KW-0025">Alternative splicing</keyword>
<keyword id="KW-0965">Cell junction</keyword>
<keyword id="KW-0963">Cytoplasm</keyword>
<keyword id="KW-1185">Reference proteome</keyword>
<comment type="function">
    <text evidence="1 2">Required for the maintenance of SKIC2 and SKIC3 proteostatic levels in the liver. May be involved in the regulation of RNA degradation by the exosome complex (By similarity). Potential tumor suppressor in gliomas.</text>
</comment>
<comment type="subunit">
    <text evidence="1">Interacts with VCL.</text>
</comment>
<comment type="subcellular location">
    <subcellularLocation>
        <location evidence="1">Cell junction</location>
        <location evidence="1">Focal adhesion</location>
    </subcellularLocation>
    <subcellularLocation>
        <location evidence="1">Cytoplasm</location>
        <location evidence="1">Cytosol</location>
    </subcellularLocation>
    <text evidence="1">In astrocytes, colocalizes with VCL to the end of actin stress fibers, which normally terminate at focal adhesions. In hepatocytes, it is found in the cytosol.</text>
</comment>
<comment type="alternative products">
    <event type="alternative splicing"/>
    <isoform>
        <id>A2AKG8-1</id>
        <name>1</name>
        <sequence type="displayed"/>
    </isoform>
    <isoform>
        <id>A2AKG8-2</id>
        <name>2</name>
        <sequence type="described" ref="VSP_030275 VSP_030276"/>
    </isoform>
    <isoform>
        <id>A2AKG8-3</id>
        <name>3</name>
        <sequence type="described" ref="VSP_030274"/>
    </isoform>
</comment>
<comment type="tissue specificity">
    <text evidence="2">Expressed by glial and neuronal cells in brain.</text>
</comment>
<comment type="sequence caution" evidence="5">
    <conflict type="erroneous initiation">
        <sequence resource="EMBL-CDS" id="BAE26929"/>
    </conflict>
</comment>
<comment type="sequence caution" evidence="5">
    <conflict type="erroneous initiation">
        <sequence resource="EMBL-CDS" id="BAE27017"/>
    </conflict>
</comment>
<protein>
    <recommendedName>
        <fullName>Focadhesin</fullName>
    </recommendedName>
</protein>
<dbReference type="EMBL" id="AK146138">
    <property type="protein sequence ID" value="BAE26929.1"/>
    <property type="status" value="ALT_INIT"/>
    <property type="molecule type" value="mRNA"/>
</dbReference>
<dbReference type="EMBL" id="AK146256">
    <property type="protein sequence ID" value="BAE27017.1"/>
    <property type="status" value="ALT_INIT"/>
    <property type="molecule type" value="mRNA"/>
</dbReference>
<dbReference type="EMBL" id="AK164030">
    <property type="protein sequence ID" value="BAE37596.1"/>
    <property type="molecule type" value="mRNA"/>
</dbReference>
<dbReference type="EMBL" id="AL772296">
    <property type="status" value="NOT_ANNOTATED_CDS"/>
    <property type="molecule type" value="Genomic_DNA"/>
</dbReference>
<dbReference type="EMBL" id="AL772316">
    <property type="status" value="NOT_ANNOTATED_CDS"/>
    <property type="molecule type" value="Genomic_DNA"/>
</dbReference>
<dbReference type="EMBL" id="AL831756">
    <property type="status" value="NOT_ANNOTATED_CDS"/>
    <property type="molecule type" value="Genomic_DNA"/>
</dbReference>
<dbReference type="EMBL" id="BX572638">
    <property type="status" value="NOT_ANNOTATED_CDS"/>
    <property type="molecule type" value="Genomic_DNA"/>
</dbReference>
<dbReference type="EMBL" id="BC039622">
    <property type="protein sequence ID" value="AAH39622.1"/>
    <property type="molecule type" value="mRNA"/>
</dbReference>
<dbReference type="EMBL" id="BC057079">
    <property type="protein sequence ID" value="AAH57079.1"/>
    <property type="molecule type" value="mRNA"/>
</dbReference>
<dbReference type="CCDS" id="CCDS38798.1">
    <molecule id="A2AKG8-1"/>
</dbReference>
<dbReference type="RefSeq" id="NP_001074653.1">
    <molecule id="A2AKG8-1"/>
    <property type="nucleotide sequence ID" value="NM_001081184.2"/>
</dbReference>
<dbReference type="RefSeq" id="NP_001406340.1">
    <molecule id="A2AKG8-2"/>
    <property type="nucleotide sequence ID" value="NM_001419411.1"/>
</dbReference>
<dbReference type="BioGRID" id="230958">
    <property type="interactions" value="1"/>
</dbReference>
<dbReference type="FunCoup" id="A2AKG8">
    <property type="interactions" value="40"/>
</dbReference>
<dbReference type="STRING" id="10090.ENSMUSP00000095602"/>
<dbReference type="GlyGen" id="A2AKG8">
    <property type="glycosylation" value="1 site"/>
</dbReference>
<dbReference type="iPTMnet" id="A2AKG8"/>
<dbReference type="PhosphoSitePlus" id="A2AKG8"/>
<dbReference type="PaxDb" id="10090-ENSMUSP00000095602"/>
<dbReference type="PeptideAtlas" id="A2AKG8"/>
<dbReference type="ProteomicsDB" id="271707">
    <molecule id="A2AKG8-1"/>
</dbReference>
<dbReference type="ProteomicsDB" id="271708">
    <molecule id="A2AKG8-2"/>
</dbReference>
<dbReference type="ProteomicsDB" id="271709">
    <molecule id="A2AKG8-3"/>
</dbReference>
<dbReference type="Pumba" id="A2AKG8"/>
<dbReference type="Antibodypedia" id="66171">
    <property type="antibodies" value="5 antibodies from 5 providers"/>
</dbReference>
<dbReference type="Ensembl" id="ENSMUST00000097992.10">
    <molecule id="A2AKG8-1"/>
    <property type="protein sequence ID" value="ENSMUSP00000095602.4"/>
    <property type="gene ID" value="ENSMUSG00000038368.17"/>
</dbReference>
<dbReference type="Ensembl" id="ENSMUST00000107147.2">
    <molecule id="A2AKG8-3"/>
    <property type="protein sequence ID" value="ENSMUSP00000102765.2"/>
    <property type="gene ID" value="ENSMUSG00000038368.17"/>
</dbReference>
<dbReference type="GeneID" id="230393"/>
<dbReference type="KEGG" id="mmu:230393"/>
<dbReference type="UCSC" id="uc008tmt.1">
    <molecule id="A2AKG8-2"/>
    <property type="organism name" value="mouse"/>
</dbReference>
<dbReference type="UCSC" id="uc008tmu.1">
    <molecule id="A2AKG8-1"/>
    <property type="organism name" value="mouse"/>
</dbReference>
<dbReference type="AGR" id="MGI:2676921"/>
<dbReference type="CTD" id="54914"/>
<dbReference type="MGI" id="MGI:2676921">
    <property type="gene designation" value="Focad"/>
</dbReference>
<dbReference type="VEuPathDB" id="HostDB:ENSMUSG00000038368"/>
<dbReference type="eggNOG" id="ENOG502QQKG">
    <property type="taxonomic scope" value="Eukaryota"/>
</dbReference>
<dbReference type="GeneTree" id="ENSGT00390000004438"/>
<dbReference type="HOGENOM" id="CLU_1342874_0_0_1"/>
<dbReference type="InParanoid" id="A2AKG8"/>
<dbReference type="OMA" id="GQLFSWF"/>
<dbReference type="OrthoDB" id="6125419at2759"/>
<dbReference type="PhylomeDB" id="A2AKG8"/>
<dbReference type="TreeFam" id="TF323261"/>
<dbReference type="BioGRID-ORCS" id="230393">
    <property type="hits" value="1 hit in 79 CRISPR screens"/>
</dbReference>
<dbReference type="ChiTaRS" id="Focad">
    <property type="organism name" value="mouse"/>
</dbReference>
<dbReference type="PRO" id="PR:A2AKG8"/>
<dbReference type="Proteomes" id="UP000000589">
    <property type="component" value="Chromosome 4"/>
</dbReference>
<dbReference type="RNAct" id="A2AKG8">
    <property type="molecule type" value="protein"/>
</dbReference>
<dbReference type="Bgee" id="ENSMUSG00000038368">
    <property type="expression patterns" value="Expressed in animal zygote and 227 other cell types or tissues"/>
</dbReference>
<dbReference type="ExpressionAtlas" id="A2AKG8">
    <property type="expression patterns" value="baseline and differential"/>
</dbReference>
<dbReference type="GO" id="GO:0005829">
    <property type="term" value="C:cytosol"/>
    <property type="evidence" value="ECO:0007669"/>
    <property type="project" value="UniProtKB-SubCell"/>
</dbReference>
<dbReference type="GO" id="GO:0005925">
    <property type="term" value="C:focal adhesion"/>
    <property type="evidence" value="ECO:0000250"/>
    <property type="project" value="UniProtKB"/>
</dbReference>
<dbReference type="GO" id="GO:0060147">
    <property type="term" value="P:regulation of post-transcriptional gene silencing"/>
    <property type="evidence" value="ECO:0007669"/>
    <property type="project" value="InterPro"/>
</dbReference>
<dbReference type="InterPro" id="IPR016024">
    <property type="entry name" value="ARM-type_fold"/>
</dbReference>
<dbReference type="InterPro" id="IPR022542">
    <property type="entry name" value="FOCAD/RST1_DUF3730"/>
</dbReference>
<dbReference type="InterPro" id="IPR045163">
    <property type="entry name" value="Focadhesin/RST1"/>
</dbReference>
<dbReference type="InterPro" id="IPR021392">
    <property type="entry name" value="Focadhesin_C"/>
</dbReference>
<dbReference type="PANTHER" id="PTHR16212:SF4">
    <property type="entry name" value="FOCADHESIN"/>
    <property type="match status" value="1"/>
</dbReference>
<dbReference type="PANTHER" id="PTHR16212">
    <property type="entry name" value="FOCADHESIN FAMILY MEMBER"/>
    <property type="match status" value="1"/>
</dbReference>
<dbReference type="Pfam" id="PF12530">
    <property type="entry name" value="DUF3730"/>
    <property type="match status" value="1"/>
</dbReference>
<dbReference type="Pfam" id="PF11229">
    <property type="entry name" value="Focadhesin"/>
    <property type="match status" value="1"/>
</dbReference>
<dbReference type="SUPFAM" id="SSF48371">
    <property type="entry name" value="ARM repeat"/>
    <property type="match status" value="1"/>
</dbReference>
<feature type="chain" id="PRO_0000314458" description="Focadhesin">
    <location>
        <begin position="1"/>
        <end position="1798"/>
    </location>
</feature>
<feature type="modified residue" description="N6-acetyllysine" evidence="1">
    <location>
        <position position="816"/>
    </location>
</feature>
<feature type="splice variant" id="VSP_030274" description="In isoform 3." evidence="3">
    <location>
        <begin position="1"/>
        <end position="1594"/>
    </location>
</feature>
<feature type="splice variant" id="VSP_030275" description="In isoform 2." evidence="4">
    <original>ALKL</original>
    <variation>GASK</variation>
    <location>
        <begin position="332"/>
        <end position="335"/>
    </location>
</feature>
<feature type="splice variant" id="VSP_030276" description="In isoform 2." evidence="4">
    <location>
        <begin position="336"/>
        <end position="1798"/>
    </location>
</feature>
<feature type="sequence conflict" description="In Ref. 3; AAH57079." evidence="5" ref="3">
    <original>Q</original>
    <variation>R</variation>
    <location>
        <position position="638"/>
    </location>
</feature>
<feature type="sequence conflict" description="In Ref. 3; AAH57079." evidence="5" ref="3">
    <original>V</original>
    <variation>A</variation>
    <location>
        <position position="679"/>
    </location>
</feature>
<feature type="sequence conflict" description="In Ref. 3; AAH57079." evidence="5" ref="3">
    <original>F</original>
    <variation>I</variation>
    <location>
        <position position="1180"/>
    </location>
</feature>
<feature type="sequence conflict" description="In Ref. 1; BAE26929/BAE27017." evidence="5" ref="1">
    <original>H</original>
    <variation>R</variation>
    <location>
        <position position="1521"/>
    </location>
</feature>
<feature type="sequence conflict" description="In Ref. 1; BAE26929/BAE27017." evidence="5" ref="1">
    <original>Q</original>
    <variation>K</variation>
    <location>
        <position position="1623"/>
    </location>
</feature>
<reference key="1">
    <citation type="journal article" date="2005" name="Science">
        <title>The transcriptional landscape of the mammalian genome.</title>
        <authorList>
            <person name="Carninci P."/>
            <person name="Kasukawa T."/>
            <person name="Katayama S."/>
            <person name="Gough J."/>
            <person name="Frith M.C."/>
            <person name="Maeda N."/>
            <person name="Oyama R."/>
            <person name="Ravasi T."/>
            <person name="Lenhard B."/>
            <person name="Wells C."/>
            <person name="Kodzius R."/>
            <person name="Shimokawa K."/>
            <person name="Bajic V.B."/>
            <person name="Brenner S.E."/>
            <person name="Batalov S."/>
            <person name="Forrest A.R."/>
            <person name="Zavolan M."/>
            <person name="Davis M.J."/>
            <person name="Wilming L.G."/>
            <person name="Aidinis V."/>
            <person name="Allen J.E."/>
            <person name="Ambesi-Impiombato A."/>
            <person name="Apweiler R."/>
            <person name="Aturaliya R.N."/>
            <person name="Bailey T.L."/>
            <person name="Bansal M."/>
            <person name="Baxter L."/>
            <person name="Beisel K.W."/>
            <person name="Bersano T."/>
            <person name="Bono H."/>
            <person name="Chalk A.M."/>
            <person name="Chiu K.P."/>
            <person name="Choudhary V."/>
            <person name="Christoffels A."/>
            <person name="Clutterbuck D.R."/>
            <person name="Crowe M.L."/>
            <person name="Dalla E."/>
            <person name="Dalrymple B.P."/>
            <person name="de Bono B."/>
            <person name="Della Gatta G."/>
            <person name="di Bernardo D."/>
            <person name="Down T."/>
            <person name="Engstrom P."/>
            <person name="Fagiolini M."/>
            <person name="Faulkner G."/>
            <person name="Fletcher C.F."/>
            <person name="Fukushima T."/>
            <person name="Furuno M."/>
            <person name="Futaki S."/>
            <person name="Gariboldi M."/>
            <person name="Georgii-Hemming P."/>
            <person name="Gingeras T.R."/>
            <person name="Gojobori T."/>
            <person name="Green R.E."/>
            <person name="Gustincich S."/>
            <person name="Harbers M."/>
            <person name="Hayashi Y."/>
            <person name="Hensch T.K."/>
            <person name="Hirokawa N."/>
            <person name="Hill D."/>
            <person name="Huminiecki L."/>
            <person name="Iacono M."/>
            <person name="Ikeo K."/>
            <person name="Iwama A."/>
            <person name="Ishikawa T."/>
            <person name="Jakt M."/>
            <person name="Kanapin A."/>
            <person name="Katoh M."/>
            <person name="Kawasawa Y."/>
            <person name="Kelso J."/>
            <person name="Kitamura H."/>
            <person name="Kitano H."/>
            <person name="Kollias G."/>
            <person name="Krishnan S.P."/>
            <person name="Kruger A."/>
            <person name="Kummerfeld S.K."/>
            <person name="Kurochkin I.V."/>
            <person name="Lareau L.F."/>
            <person name="Lazarevic D."/>
            <person name="Lipovich L."/>
            <person name="Liu J."/>
            <person name="Liuni S."/>
            <person name="McWilliam S."/>
            <person name="Madan Babu M."/>
            <person name="Madera M."/>
            <person name="Marchionni L."/>
            <person name="Matsuda H."/>
            <person name="Matsuzawa S."/>
            <person name="Miki H."/>
            <person name="Mignone F."/>
            <person name="Miyake S."/>
            <person name="Morris K."/>
            <person name="Mottagui-Tabar S."/>
            <person name="Mulder N."/>
            <person name="Nakano N."/>
            <person name="Nakauchi H."/>
            <person name="Ng P."/>
            <person name="Nilsson R."/>
            <person name="Nishiguchi S."/>
            <person name="Nishikawa S."/>
            <person name="Nori F."/>
            <person name="Ohara O."/>
            <person name="Okazaki Y."/>
            <person name="Orlando V."/>
            <person name="Pang K.C."/>
            <person name="Pavan W.J."/>
            <person name="Pavesi G."/>
            <person name="Pesole G."/>
            <person name="Petrovsky N."/>
            <person name="Piazza S."/>
            <person name="Reed J."/>
            <person name="Reid J.F."/>
            <person name="Ring B.Z."/>
            <person name="Ringwald M."/>
            <person name="Rost B."/>
            <person name="Ruan Y."/>
            <person name="Salzberg S.L."/>
            <person name="Sandelin A."/>
            <person name="Schneider C."/>
            <person name="Schoenbach C."/>
            <person name="Sekiguchi K."/>
            <person name="Semple C.A."/>
            <person name="Seno S."/>
            <person name="Sessa L."/>
            <person name="Sheng Y."/>
            <person name="Shibata Y."/>
            <person name="Shimada H."/>
            <person name="Shimada K."/>
            <person name="Silva D."/>
            <person name="Sinclair B."/>
            <person name="Sperling S."/>
            <person name="Stupka E."/>
            <person name="Sugiura K."/>
            <person name="Sultana R."/>
            <person name="Takenaka Y."/>
            <person name="Taki K."/>
            <person name="Tammoja K."/>
            <person name="Tan S.L."/>
            <person name="Tang S."/>
            <person name="Taylor M.S."/>
            <person name="Tegner J."/>
            <person name="Teichmann S.A."/>
            <person name="Ueda H.R."/>
            <person name="van Nimwegen E."/>
            <person name="Verardo R."/>
            <person name="Wei C.L."/>
            <person name="Yagi K."/>
            <person name="Yamanishi H."/>
            <person name="Zabarovsky E."/>
            <person name="Zhu S."/>
            <person name="Zimmer A."/>
            <person name="Hide W."/>
            <person name="Bult C."/>
            <person name="Grimmond S.M."/>
            <person name="Teasdale R.D."/>
            <person name="Liu E.T."/>
            <person name="Brusic V."/>
            <person name="Quackenbush J."/>
            <person name="Wahlestedt C."/>
            <person name="Mattick J.S."/>
            <person name="Hume D.A."/>
            <person name="Kai C."/>
            <person name="Sasaki D."/>
            <person name="Tomaru Y."/>
            <person name="Fukuda S."/>
            <person name="Kanamori-Katayama M."/>
            <person name="Suzuki M."/>
            <person name="Aoki J."/>
            <person name="Arakawa T."/>
            <person name="Iida J."/>
            <person name="Imamura K."/>
            <person name="Itoh M."/>
            <person name="Kato T."/>
            <person name="Kawaji H."/>
            <person name="Kawagashira N."/>
            <person name="Kawashima T."/>
            <person name="Kojima M."/>
            <person name="Kondo S."/>
            <person name="Konno H."/>
            <person name="Nakano K."/>
            <person name="Ninomiya N."/>
            <person name="Nishio T."/>
            <person name="Okada M."/>
            <person name="Plessy C."/>
            <person name="Shibata K."/>
            <person name="Shiraki T."/>
            <person name="Suzuki S."/>
            <person name="Tagami M."/>
            <person name="Waki K."/>
            <person name="Watahiki A."/>
            <person name="Okamura-Oho Y."/>
            <person name="Suzuki H."/>
            <person name="Kawai J."/>
            <person name="Hayashizaki Y."/>
        </authorList>
    </citation>
    <scope>NUCLEOTIDE SEQUENCE [LARGE SCALE MRNA] (ISOFORM 2)</scope>
    <scope>NUCLEOTIDE SEQUENCE [LARGE SCALE MRNA] OF 1183-1798 (ISOFORM 1)</scope>
    <source>
        <strain>C57BL/6J</strain>
        <strain>DBA/2J</strain>
        <tissue>Embryo</tissue>
    </source>
</reference>
<reference key="2">
    <citation type="journal article" date="2009" name="PLoS Biol.">
        <title>Lineage-specific biology revealed by a finished genome assembly of the mouse.</title>
        <authorList>
            <person name="Church D.M."/>
            <person name="Goodstadt L."/>
            <person name="Hillier L.W."/>
            <person name="Zody M.C."/>
            <person name="Goldstein S."/>
            <person name="She X."/>
            <person name="Bult C.J."/>
            <person name="Agarwala R."/>
            <person name="Cherry J.L."/>
            <person name="DiCuccio M."/>
            <person name="Hlavina W."/>
            <person name="Kapustin Y."/>
            <person name="Meric P."/>
            <person name="Maglott D."/>
            <person name="Birtle Z."/>
            <person name="Marques A.C."/>
            <person name="Graves T."/>
            <person name="Zhou S."/>
            <person name="Teague B."/>
            <person name="Potamousis K."/>
            <person name="Churas C."/>
            <person name="Place M."/>
            <person name="Herschleb J."/>
            <person name="Runnheim R."/>
            <person name="Forrest D."/>
            <person name="Amos-Landgraf J."/>
            <person name="Schwartz D.C."/>
            <person name="Cheng Z."/>
            <person name="Lindblad-Toh K."/>
            <person name="Eichler E.E."/>
            <person name="Ponting C.P."/>
        </authorList>
    </citation>
    <scope>NUCLEOTIDE SEQUENCE [LARGE SCALE GENOMIC DNA]</scope>
    <source>
        <strain>C57BL/6J</strain>
    </source>
</reference>
<reference key="3">
    <citation type="journal article" date="2004" name="Genome Res.">
        <title>The status, quality, and expansion of the NIH full-length cDNA project: the Mammalian Gene Collection (MGC).</title>
        <authorList>
            <consortium name="The MGC Project Team"/>
        </authorList>
    </citation>
    <scope>NUCLEOTIDE SEQUENCE [LARGE SCALE MRNA] (ISOFORM 3)</scope>
    <scope>NUCLEOTIDE SEQUENCE [LARGE SCALE MRNA] OF 483-1798 (ISOFORM 1)</scope>
    <source>
        <strain>C57BL/6J</strain>
        <strain>FVB/N-3</strain>
        <tissue>Embryonic brain</tissue>
        <tissue>Mammary tumor</tissue>
    </source>
</reference>
<reference key="4">
    <citation type="journal article" date="2010" name="Cell">
        <title>A tissue-specific atlas of mouse protein phosphorylation and expression.</title>
        <authorList>
            <person name="Huttlin E.L."/>
            <person name="Jedrychowski M.P."/>
            <person name="Elias J.E."/>
            <person name="Goswami T."/>
            <person name="Rad R."/>
            <person name="Beausoleil S.A."/>
            <person name="Villen J."/>
            <person name="Haas W."/>
            <person name="Sowa M.E."/>
            <person name="Gygi S.P."/>
        </authorList>
    </citation>
    <scope>IDENTIFICATION BY MASS SPECTROMETRY [LARGE SCALE ANALYSIS]</scope>
    <source>
        <tissue>Brain</tissue>
        <tissue>Heart</tissue>
        <tissue>Kidney</tissue>
        <tissue>Liver</tissue>
        <tissue>Lung</tissue>
        <tissue>Pancreas</tissue>
        <tissue>Spleen</tissue>
        <tissue>Testis</tissue>
    </source>
</reference>
<reference key="5">
    <citation type="journal article" date="2012" name="Brain">
        <title>KIAA1797/FOCAD encodes a novel focal adhesion protein with tumour suppressor function in gliomas.</title>
        <authorList>
            <person name="Brockschmidt A."/>
            <person name="Trost D."/>
            <person name="Peterziel H."/>
            <person name="Zimmermann K."/>
            <person name="Ehrler M."/>
            <person name="Grassmann H."/>
            <person name="Pfenning P.N."/>
            <person name="Waha A."/>
            <person name="Wohlleber D."/>
            <person name="Brockschmidt F.F."/>
            <person name="Jugold M."/>
            <person name="Hoischen A."/>
            <person name="Kalla C."/>
            <person name="Waha A."/>
            <person name="Seifert G."/>
            <person name="Knolle P.A."/>
            <person name="Latz E."/>
            <person name="Hans V.H."/>
            <person name="Wick W."/>
            <person name="Pfeifer A."/>
            <person name="Angel P."/>
            <person name="Weber R.G."/>
        </authorList>
    </citation>
    <scope>TISSUE SPECIFICITY</scope>
    <scope>FUNCTION</scope>
</reference>
<name>FOCAD_MOUSE</name>
<accession>A2AKG8</accession>
<accession>Q0P620</accession>
<accession>Q3TPY9</accession>
<accession>Q3UJY8</accession>
<accession>Q3UK73</accession>
<accession>Q6PGE3</accession>
<organism>
    <name type="scientific">Mus musculus</name>
    <name type="common">Mouse</name>
    <dbReference type="NCBI Taxonomy" id="10090"/>
    <lineage>
        <taxon>Eukaryota</taxon>
        <taxon>Metazoa</taxon>
        <taxon>Chordata</taxon>
        <taxon>Craniata</taxon>
        <taxon>Vertebrata</taxon>
        <taxon>Euteleostomi</taxon>
        <taxon>Mammalia</taxon>
        <taxon>Eutheria</taxon>
        <taxon>Euarchontoglires</taxon>
        <taxon>Glires</taxon>
        <taxon>Rodentia</taxon>
        <taxon>Myomorpha</taxon>
        <taxon>Muroidea</taxon>
        <taxon>Muridae</taxon>
        <taxon>Murinae</taxon>
        <taxon>Mus</taxon>
        <taxon>Mus</taxon>
    </lineage>
</organism>